<keyword id="KW-1003">Cell membrane</keyword>
<keyword id="KW-0210">Decarboxylase</keyword>
<keyword id="KW-0444">Lipid biosynthesis</keyword>
<keyword id="KW-0443">Lipid metabolism</keyword>
<keyword id="KW-0456">Lyase</keyword>
<keyword id="KW-0472">Membrane</keyword>
<keyword id="KW-0594">Phospholipid biosynthesis</keyword>
<keyword id="KW-1208">Phospholipid metabolism</keyword>
<keyword id="KW-0670">Pyruvate</keyword>
<keyword id="KW-0865">Zymogen</keyword>
<organism>
    <name type="scientific">Francisella tularensis subsp. holarctica (strain OSU18)</name>
    <dbReference type="NCBI Taxonomy" id="393011"/>
    <lineage>
        <taxon>Bacteria</taxon>
        <taxon>Pseudomonadati</taxon>
        <taxon>Pseudomonadota</taxon>
        <taxon>Gammaproteobacteria</taxon>
        <taxon>Thiotrichales</taxon>
        <taxon>Francisellaceae</taxon>
        <taxon>Francisella</taxon>
    </lineage>
</organism>
<proteinExistence type="inferred from homology"/>
<gene>
    <name evidence="1" type="primary">psd</name>
    <name type="ordered locus">FTH_0447</name>
</gene>
<feature type="chain" id="PRO_0000262111" description="Phosphatidylserine decarboxylase beta chain" evidence="1">
    <location>
        <begin position="1"/>
        <end position="247"/>
    </location>
</feature>
<feature type="chain" id="PRO_0000262112" description="Phosphatidylserine decarboxylase alpha chain" evidence="1">
    <location>
        <begin position="248"/>
        <end position="283"/>
    </location>
</feature>
<feature type="active site" description="Charge relay system; for autoendoproteolytic cleavage activity" evidence="1">
    <location>
        <position position="90"/>
    </location>
</feature>
<feature type="active site" description="Charge relay system; for autoendoproteolytic cleavage activity" evidence="1">
    <location>
        <position position="143"/>
    </location>
</feature>
<feature type="active site" description="Charge relay system; for autoendoproteolytic cleavage activity" evidence="1">
    <location>
        <position position="248"/>
    </location>
</feature>
<feature type="active site" description="Schiff-base intermediate with substrate; via pyruvic acid; for decarboxylase activity" evidence="1">
    <location>
        <position position="248"/>
    </location>
</feature>
<feature type="site" description="Cleavage (non-hydrolytic); by autocatalysis" evidence="1">
    <location>
        <begin position="247"/>
        <end position="248"/>
    </location>
</feature>
<feature type="modified residue" description="Pyruvic acid (Ser); by autocatalysis" evidence="1">
    <location>
        <position position="248"/>
    </location>
</feature>
<dbReference type="EC" id="4.1.1.65" evidence="1"/>
<dbReference type="EMBL" id="CP000437">
    <property type="protein sequence ID" value="ABI82435.1"/>
    <property type="molecule type" value="Genomic_DNA"/>
</dbReference>
<dbReference type="SMR" id="Q0BN99"/>
<dbReference type="KEGG" id="fth:FTH_0447"/>
<dbReference type="UniPathway" id="UPA00558">
    <property type="reaction ID" value="UER00616"/>
</dbReference>
<dbReference type="GO" id="GO:0005886">
    <property type="term" value="C:plasma membrane"/>
    <property type="evidence" value="ECO:0007669"/>
    <property type="project" value="UniProtKB-SubCell"/>
</dbReference>
<dbReference type="GO" id="GO:0004609">
    <property type="term" value="F:phosphatidylserine decarboxylase activity"/>
    <property type="evidence" value="ECO:0007669"/>
    <property type="project" value="UniProtKB-UniRule"/>
</dbReference>
<dbReference type="GO" id="GO:0006646">
    <property type="term" value="P:phosphatidylethanolamine biosynthetic process"/>
    <property type="evidence" value="ECO:0007669"/>
    <property type="project" value="UniProtKB-UniRule"/>
</dbReference>
<dbReference type="HAMAP" id="MF_00662">
    <property type="entry name" value="PS_decarb_PSD_B_type1"/>
    <property type="match status" value="1"/>
</dbReference>
<dbReference type="InterPro" id="IPR003817">
    <property type="entry name" value="PS_Dcarbxylase"/>
</dbReference>
<dbReference type="InterPro" id="IPR033177">
    <property type="entry name" value="PSD-B"/>
</dbReference>
<dbReference type="InterPro" id="IPR033178">
    <property type="entry name" value="PSD_type1_pro"/>
</dbReference>
<dbReference type="NCBIfam" id="TIGR00163">
    <property type="entry name" value="PS_decarb"/>
    <property type="match status" value="1"/>
</dbReference>
<dbReference type="PANTHER" id="PTHR10067">
    <property type="entry name" value="PHOSPHATIDYLSERINE DECARBOXYLASE"/>
    <property type="match status" value="1"/>
</dbReference>
<dbReference type="PANTHER" id="PTHR10067:SF6">
    <property type="entry name" value="PHOSPHATIDYLSERINE DECARBOXYLASE PROENZYME, MITOCHONDRIAL"/>
    <property type="match status" value="1"/>
</dbReference>
<dbReference type="Pfam" id="PF02666">
    <property type="entry name" value="PS_Dcarbxylase"/>
    <property type="match status" value="1"/>
</dbReference>
<reference key="1">
    <citation type="journal article" date="2006" name="J. Bacteriol.">
        <title>Chromosome rearrangement and diversification of Francisella tularensis revealed by the type B (OSU18) genome sequence.</title>
        <authorList>
            <person name="Petrosino J.F."/>
            <person name="Xiang Q."/>
            <person name="Karpathy S.E."/>
            <person name="Jiang H."/>
            <person name="Yerrapragada S."/>
            <person name="Liu Y."/>
            <person name="Gioia J."/>
            <person name="Hemphill L."/>
            <person name="Gonzalez A."/>
            <person name="Raghavan T.M."/>
            <person name="Uzman A."/>
            <person name="Fox G.E."/>
            <person name="Highlander S."/>
            <person name="Reichard M."/>
            <person name="Morton R.J."/>
            <person name="Clinkenbeard K.D."/>
            <person name="Weinstock G.M."/>
        </authorList>
    </citation>
    <scope>NUCLEOTIDE SEQUENCE [LARGE SCALE GENOMIC DNA]</scope>
    <source>
        <strain>OSU18</strain>
    </source>
</reference>
<name>PSD_FRATO</name>
<comment type="function">
    <text evidence="1">Catalyzes the formation of phosphatidylethanolamine (PtdEtn) from phosphatidylserine (PtdSer).</text>
</comment>
<comment type="catalytic activity">
    <reaction evidence="1">
        <text>a 1,2-diacyl-sn-glycero-3-phospho-L-serine + H(+) = a 1,2-diacyl-sn-glycero-3-phosphoethanolamine + CO2</text>
        <dbReference type="Rhea" id="RHEA:20828"/>
        <dbReference type="ChEBI" id="CHEBI:15378"/>
        <dbReference type="ChEBI" id="CHEBI:16526"/>
        <dbReference type="ChEBI" id="CHEBI:57262"/>
        <dbReference type="ChEBI" id="CHEBI:64612"/>
        <dbReference type="EC" id="4.1.1.65"/>
    </reaction>
</comment>
<comment type="cofactor">
    <cofactor evidence="1">
        <name>pyruvate</name>
        <dbReference type="ChEBI" id="CHEBI:15361"/>
    </cofactor>
    <text evidence="1">Binds 1 pyruvoyl group covalently per subunit.</text>
</comment>
<comment type="pathway">
    <text evidence="1">Phospholipid metabolism; phosphatidylethanolamine biosynthesis; phosphatidylethanolamine from CDP-diacylglycerol: step 2/2.</text>
</comment>
<comment type="subunit">
    <text evidence="1">Heterodimer of a large membrane-associated beta subunit and a small pyruvoyl-containing alpha subunit.</text>
</comment>
<comment type="subcellular location">
    <subcellularLocation>
        <location evidence="1">Cell membrane</location>
        <topology evidence="1">Peripheral membrane protein</topology>
    </subcellularLocation>
</comment>
<comment type="PTM">
    <text evidence="1">Is synthesized initially as an inactive proenzyme. Formation of the active enzyme involves a self-maturation process in which the active site pyruvoyl group is generated from an internal serine residue via an autocatalytic post-translational modification. Two non-identical subunits are generated from the proenzyme in this reaction, and the pyruvate is formed at the N-terminus of the alpha chain, which is derived from the carboxyl end of the proenzyme. The autoendoproteolytic cleavage occurs by a canonical serine protease mechanism, in which the side chain hydroxyl group of the serine supplies its oxygen atom to form the C-terminus of the beta chain, while the remainder of the serine residue undergoes an oxidative deamination to produce ammonia and the pyruvoyl prosthetic group on the alpha chain. During this reaction, the Ser that is part of the protease active site of the proenzyme becomes the pyruvoyl prosthetic group, which constitutes an essential element of the active site of the mature decarboxylase.</text>
</comment>
<comment type="similarity">
    <text evidence="1">Belongs to the phosphatidylserine decarboxylase family. PSD-B subfamily. Prokaryotic type I sub-subfamily.</text>
</comment>
<accession>Q0BN99</accession>
<protein>
    <recommendedName>
        <fullName evidence="1">Phosphatidylserine decarboxylase proenzyme</fullName>
        <ecNumber evidence="1">4.1.1.65</ecNumber>
    </recommendedName>
    <component>
        <recommendedName>
            <fullName evidence="1">Phosphatidylserine decarboxylase alpha chain</fullName>
        </recommendedName>
    </component>
    <component>
        <recommendedName>
            <fullName evidence="1">Phosphatidylserine decarboxylase beta chain</fullName>
        </recommendedName>
    </component>
</protein>
<sequence>MRDNLFIYLQYLLPHTLTSRLVSKLADSENKIIKNHLIKLAIKKFNINLVEAKETDISKYKSFNDFFIRELKDDLRPISNDKNVISSPADGVLSQFGTITDNSLIQAKGKLFSLESLIASSSTTSFTKFATIYLSPKDYHRVHMPIDGKLTKMVYIPGKLFSVNKITTSKVDNLFAKNERLICYFDTIIGEIAVIFVGALLVAGIETVWHGKIAPNYYKDIQTWDYNSAKFNIKFNKGDILGWFNFGSTVIILTSGNNVSFKFEENKNNIKIQVNQDLALITE</sequence>
<evidence type="ECO:0000255" key="1">
    <source>
        <dbReference type="HAMAP-Rule" id="MF_00662"/>
    </source>
</evidence>